<gene>
    <name type="primary">Pcsk2</name>
    <name type="synonym">Nec-2</name>
    <name type="synonym">Nec2</name>
</gene>
<name>NEC2_MOUSE</name>
<comment type="function">
    <text evidence="1">Serine endopeptidase which is involved in the processing of hormone and other protein precursors at sites comprised of pairs of basic amino acid residues. Responsible for the release of glucagon from proglucagon in pancreatic A cells (By similarity).</text>
</comment>
<comment type="catalytic activity">
    <reaction>
        <text>Release of protein hormones and neuropeptides from their precursors, generally by hydrolysis of -Lys-Arg-|- bonds.</text>
        <dbReference type="EC" id="3.4.21.94"/>
    </reaction>
</comment>
<comment type="subcellular location">
    <subcellularLocation>
        <location evidence="1">Cytoplasmic vesicle</location>
        <location evidence="1">Secretory vesicle</location>
    </subcellularLocation>
    <subcellularLocation>
        <location evidence="1">Secreted</location>
    </subcellularLocation>
    <text evidence="1">Localized in the secretion granules.</text>
</comment>
<comment type="similarity">
    <text evidence="6">Belongs to the peptidase S8 family. Furin subfamily.</text>
</comment>
<accession>P21661</accession>
<accession>Q80WU1</accession>
<proteinExistence type="evidence at protein level"/>
<dbReference type="EC" id="3.4.21.94"/>
<dbReference type="EMBL" id="M55669">
    <property type="protein sequence ID" value="AAA39376.1"/>
    <property type="molecule type" value="mRNA"/>
</dbReference>
<dbReference type="EMBL" id="BC052013">
    <property type="protein sequence ID" value="AAH52013.2"/>
    <property type="molecule type" value="mRNA"/>
</dbReference>
<dbReference type="EMBL" id="BC057348">
    <property type="protein sequence ID" value="AAH57348.1"/>
    <property type="molecule type" value="mRNA"/>
</dbReference>
<dbReference type="CCDS" id="CCDS16810.1"/>
<dbReference type="PIR" id="B35571">
    <property type="entry name" value="KXMSC2"/>
</dbReference>
<dbReference type="RefSeq" id="NP_032818.1">
    <property type="nucleotide sequence ID" value="NM_008792.4"/>
</dbReference>
<dbReference type="SMR" id="P21661"/>
<dbReference type="BioGRID" id="202058">
    <property type="interactions" value="7"/>
</dbReference>
<dbReference type="FunCoup" id="P21661">
    <property type="interactions" value="315"/>
</dbReference>
<dbReference type="STRING" id="10090.ENSMUSP00000028905"/>
<dbReference type="MEROPS" id="S08.073"/>
<dbReference type="GlyConnect" id="2546">
    <property type="glycosylation" value="7 N-Linked glycans (3 sites)"/>
</dbReference>
<dbReference type="GlyCosmos" id="P21661">
    <property type="glycosylation" value="3 sites, 7 glycans"/>
</dbReference>
<dbReference type="GlyGen" id="P21661">
    <property type="glycosylation" value="3 sites, 9 N-linked glycans (3 sites)"/>
</dbReference>
<dbReference type="iPTMnet" id="P21661"/>
<dbReference type="PhosphoSitePlus" id="P21661"/>
<dbReference type="SwissPalm" id="P21661"/>
<dbReference type="PaxDb" id="10090-ENSMUSP00000028905"/>
<dbReference type="PeptideAtlas" id="P21661"/>
<dbReference type="ProteomicsDB" id="252799"/>
<dbReference type="Antibodypedia" id="9205">
    <property type="antibodies" value="209 antibodies from 32 providers"/>
</dbReference>
<dbReference type="DNASU" id="18549"/>
<dbReference type="Ensembl" id="ENSMUST00000028905.10">
    <property type="protein sequence ID" value="ENSMUSP00000028905.10"/>
    <property type="gene ID" value="ENSMUSG00000027419.10"/>
</dbReference>
<dbReference type="GeneID" id="18549"/>
<dbReference type="KEGG" id="mmu:18549"/>
<dbReference type="UCSC" id="uc008mqf.2">
    <property type="organism name" value="mouse"/>
</dbReference>
<dbReference type="AGR" id="MGI:97512"/>
<dbReference type="CTD" id="5126"/>
<dbReference type="MGI" id="MGI:97512">
    <property type="gene designation" value="Pcsk2"/>
</dbReference>
<dbReference type="VEuPathDB" id="HostDB:ENSMUSG00000027419"/>
<dbReference type="eggNOG" id="KOG3526">
    <property type="taxonomic scope" value="Eukaryota"/>
</dbReference>
<dbReference type="GeneTree" id="ENSGT00940000156965"/>
<dbReference type="HOGENOM" id="CLU_002976_4_4_1"/>
<dbReference type="InParanoid" id="P21661"/>
<dbReference type="OMA" id="LAKQWHS"/>
<dbReference type="OrthoDB" id="300641at2759"/>
<dbReference type="PhylomeDB" id="P21661"/>
<dbReference type="TreeFam" id="TF314277"/>
<dbReference type="BRENDA" id="3.4.21.94">
    <property type="organism ID" value="3474"/>
</dbReference>
<dbReference type="BioGRID-ORCS" id="18549">
    <property type="hits" value="3 hits in 78 CRISPR screens"/>
</dbReference>
<dbReference type="ChiTaRS" id="Pcsk2">
    <property type="organism name" value="mouse"/>
</dbReference>
<dbReference type="PRO" id="PR:P21661"/>
<dbReference type="Proteomes" id="UP000000589">
    <property type="component" value="Chromosome 2"/>
</dbReference>
<dbReference type="RNAct" id="P21661">
    <property type="molecule type" value="protein"/>
</dbReference>
<dbReference type="Bgee" id="ENSMUSG00000027419">
    <property type="expression patterns" value="Expressed in islet of Langerhans and 116 other cell types or tissues"/>
</dbReference>
<dbReference type="ExpressionAtlas" id="P21661">
    <property type="expression patterns" value="baseline and differential"/>
</dbReference>
<dbReference type="GO" id="GO:0005788">
    <property type="term" value="C:endoplasmic reticulum lumen"/>
    <property type="evidence" value="ECO:0000304"/>
    <property type="project" value="Reactome"/>
</dbReference>
<dbReference type="GO" id="GO:0005615">
    <property type="term" value="C:extracellular space"/>
    <property type="evidence" value="ECO:0000314"/>
    <property type="project" value="BHF-UCL"/>
</dbReference>
<dbReference type="GO" id="GO:0016020">
    <property type="term" value="C:membrane"/>
    <property type="evidence" value="ECO:0007669"/>
    <property type="project" value="Ensembl"/>
</dbReference>
<dbReference type="GO" id="GO:0005654">
    <property type="term" value="C:nucleoplasm"/>
    <property type="evidence" value="ECO:0007669"/>
    <property type="project" value="Ensembl"/>
</dbReference>
<dbReference type="GO" id="GO:0030141">
    <property type="term" value="C:secretory granule"/>
    <property type="evidence" value="ECO:0000314"/>
    <property type="project" value="MGI"/>
</dbReference>
<dbReference type="GO" id="GO:0034774">
    <property type="term" value="C:secretory granule lumen"/>
    <property type="evidence" value="ECO:0000304"/>
    <property type="project" value="Reactome"/>
</dbReference>
<dbReference type="GO" id="GO:0030133">
    <property type="term" value="C:transport vesicle"/>
    <property type="evidence" value="ECO:0007669"/>
    <property type="project" value="UniProtKB-SubCell"/>
</dbReference>
<dbReference type="GO" id="GO:0004175">
    <property type="term" value="F:endopeptidase activity"/>
    <property type="evidence" value="ECO:0000314"/>
    <property type="project" value="BHF-UCL"/>
</dbReference>
<dbReference type="GO" id="GO:0004252">
    <property type="term" value="F:serine-type endopeptidase activity"/>
    <property type="evidence" value="ECO:0000314"/>
    <property type="project" value="BHF-UCL"/>
</dbReference>
<dbReference type="GO" id="GO:0034230">
    <property type="term" value="P:enkephalin processing"/>
    <property type="evidence" value="ECO:0000314"/>
    <property type="project" value="BHF-UCL"/>
</dbReference>
<dbReference type="GO" id="GO:0030070">
    <property type="term" value="P:insulin processing"/>
    <property type="evidence" value="ECO:0000315"/>
    <property type="project" value="MGI"/>
</dbReference>
<dbReference type="GO" id="GO:0007399">
    <property type="term" value="P:nervous system development"/>
    <property type="evidence" value="ECO:0000270"/>
    <property type="project" value="HGNC-UCL"/>
</dbReference>
<dbReference type="GO" id="GO:0016486">
    <property type="term" value="P:peptide hormone processing"/>
    <property type="evidence" value="ECO:0000314"/>
    <property type="project" value="BHF-UCL"/>
</dbReference>
<dbReference type="GO" id="GO:0016540">
    <property type="term" value="P:protein autoprocessing"/>
    <property type="evidence" value="ECO:0000314"/>
    <property type="project" value="HGNC-UCL"/>
</dbReference>
<dbReference type="GO" id="GO:0016485">
    <property type="term" value="P:protein processing"/>
    <property type="evidence" value="ECO:0000314"/>
    <property type="project" value="BHF-UCL"/>
</dbReference>
<dbReference type="GO" id="GO:0006508">
    <property type="term" value="P:proteolysis"/>
    <property type="evidence" value="ECO:0000315"/>
    <property type="project" value="MGI"/>
</dbReference>
<dbReference type="CDD" id="cd04059">
    <property type="entry name" value="Peptidases_S8_Protein_convertases_Kexins_Furin-like"/>
    <property type="match status" value="1"/>
</dbReference>
<dbReference type="FunFam" id="2.60.120.260:FF:000020">
    <property type="entry name" value="neuroendocrine convertase 2"/>
    <property type="match status" value="1"/>
</dbReference>
<dbReference type="FunFam" id="3.30.70.850:FF:000003">
    <property type="entry name" value="neuroendocrine convertase 2 isoform X1"/>
    <property type="match status" value="1"/>
</dbReference>
<dbReference type="FunFam" id="3.40.50.200:FF:000004">
    <property type="entry name" value="Proprotein convertase type 2"/>
    <property type="match status" value="1"/>
</dbReference>
<dbReference type="Gene3D" id="2.60.120.260">
    <property type="entry name" value="Galactose-binding domain-like"/>
    <property type="match status" value="1"/>
</dbReference>
<dbReference type="Gene3D" id="3.30.70.850">
    <property type="entry name" value="Peptidase S8, pro-domain"/>
    <property type="match status" value="1"/>
</dbReference>
<dbReference type="Gene3D" id="3.40.50.200">
    <property type="entry name" value="Peptidase S8/S53 domain"/>
    <property type="match status" value="1"/>
</dbReference>
<dbReference type="InterPro" id="IPR008979">
    <property type="entry name" value="Galactose-bd-like_sf"/>
</dbReference>
<dbReference type="InterPro" id="IPR034182">
    <property type="entry name" value="Kexin/furin"/>
</dbReference>
<dbReference type="InterPro" id="IPR002884">
    <property type="entry name" value="P_dom"/>
</dbReference>
<dbReference type="InterPro" id="IPR000209">
    <property type="entry name" value="Peptidase_S8/S53_dom"/>
</dbReference>
<dbReference type="InterPro" id="IPR036852">
    <property type="entry name" value="Peptidase_S8/S53_dom_sf"/>
</dbReference>
<dbReference type="InterPro" id="IPR023827">
    <property type="entry name" value="Peptidase_S8_Asp-AS"/>
</dbReference>
<dbReference type="InterPro" id="IPR022398">
    <property type="entry name" value="Peptidase_S8_His-AS"/>
</dbReference>
<dbReference type="InterPro" id="IPR023828">
    <property type="entry name" value="Peptidase_S8_Ser-AS"/>
</dbReference>
<dbReference type="InterPro" id="IPR015500">
    <property type="entry name" value="Peptidase_S8_subtilisin-rel"/>
</dbReference>
<dbReference type="InterPro" id="IPR032815">
    <property type="entry name" value="S8_pro-domain"/>
</dbReference>
<dbReference type="InterPro" id="IPR038466">
    <property type="entry name" value="S8_pro-domain_sf"/>
</dbReference>
<dbReference type="PANTHER" id="PTHR42884:SF13">
    <property type="entry name" value="NEUROENDOCRINE CONVERTASE 2"/>
    <property type="match status" value="1"/>
</dbReference>
<dbReference type="PANTHER" id="PTHR42884">
    <property type="entry name" value="PROPROTEIN CONVERTASE SUBTILISIN/KEXIN-RELATED"/>
    <property type="match status" value="1"/>
</dbReference>
<dbReference type="Pfam" id="PF01483">
    <property type="entry name" value="P_proprotein"/>
    <property type="match status" value="1"/>
</dbReference>
<dbReference type="Pfam" id="PF00082">
    <property type="entry name" value="Peptidase_S8"/>
    <property type="match status" value="1"/>
</dbReference>
<dbReference type="Pfam" id="PF16470">
    <property type="entry name" value="S8_pro-domain"/>
    <property type="match status" value="1"/>
</dbReference>
<dbReference type="PRINTS" id="PR00723">
    <property type="entry name" value="SUBTILISIN"/>
</dbReference>
<dbReference type="SUPFAM" id="SSF49785">
    <property type="entry name" value="Galactose-binding domain-like"/>
    <property type="match status" value="1"/>
</dbReference>
<dbReference type="SUPFAM" id="SSF54897">
    <property type="entry name" value="Protease propeptides/inhibitors"/>
    <property type="match status" value="1"/>
</dbReference>
<dbReference type="SUPFAM" id="SSF52743">
    <property type="entry name" value="Subtilisin-like"/>
    <property type="match status" value="1"/>
</dbReference>
<dbReference type="PROSITE" id="PS51829">
    <property type="entry name" value="P_HOMO_B"/>
    <property type="match status" value="1"/>
</dbReference>
<dbReference type="PROSITE" id="PS51892">
    <property type="entry name" value="SUBTILASE"/>
    <property type="match status" value="1"/>
</dbReference>
<dbReference type="PROSITE" id="PS00136">
    <property type="entry name" value="SUBTILASE_ASP"/>
    <property type="match status" value="1"/>
</dbReference>
<dbReference type="PROSITE" id="PS00137">
    <property type="entry name" value="SUBTILASE_HIS"/>
    <property type="match status" value="1"/>
</dbReference>
<dbReference type="PROSITE" id="PS00138">
    <property type="entry name" value="SUBTILASE_SER"/>
    <property type="match status" value="1"/>
</dbReference>
<protein>
    <recommendedName>
        <fullName>Neuroendocrine convertase 2</fullName>
        <shortName>NEC 2</shortName>
        <ecNumber>3.4.21.94</ecNumber>
    </recommendedName>
    <alternativeName>
        <fullName>KEX2-like endoprotease 2</fullName>
    </alternativeName>
    <alternativeName>
        <fullName>Prohormone convertase 2</fullName>
    </alternativeName>
    <alternativeName>
        <fullName>Proprotein convertase 2</fullName>
        <shortName>PC2</shortName>
    </alternativeName>
</protein>
<sequence>MEGGCGSQWKAAGFLFCVMVFASAERPVFTNHFLVELHKDGEEEARQVAAEHGFGVRKLPFAEGLYHFYHNGLAKAKRRRSLHHKRQLERDPRIKMALQQEGFDRKKRGYRDINEIDINMNDPLFTKQWYLFNTGQADGTPGLDLNVAEAWELGYTGKGVTIGIMDDGIDYLHPDLAYNYNADASYDFSSNDPYPYPRYTDDWFNSHGTRCAGEVSAAASNNICGVGVAYNSKVAGIRMLDQPFMTDIIEASSISHMPQLIDIYSASWGPTDNGKTVDGPRELTLQAMADGVNKGRGGKGSIYVWASGDGGSYDDCNCDGYASSMWTISINSAINDGRTALYDESCSSTLASTFSNGRKRNPEAGVATTDLYGNCTLRHSGTSAAAPEAAGVFALALEANLDLTWRDMQHLTVLTSKRNQLHDEVHQWRRNGVGLEFNHLFGYGVLDAGAMVKMAKDWKTVPERFHCVGGSVQNPEKIPPTGKLVLTLKTNACEGKENFVRYLEHVQAVITVNATRRGDLNINMTSPMGTKSILLSRRPRDDDSKVGFDKWPFMTTHTWGEDARGTWTLELGFVGSAPQKGLLKEWTLMLHGTQSAPYIDQVVRDYQSKLAMSKKQELEEELDEAVERSLQSILRKN</sequence>
<organism>
    <name type="scientific">Mus musculus</name>
    <name type="common">Mouse</name>
    <dbReference type="NCBI Taxonomy" id="10090"/>
    <lineage>
        <taxon>Eukaryota</taxon>
        <taxon>Metazoa</taxon>
        <taxon>Chordata</taxon>
        <taxon>Craniata</taxon>
        <taxon>Vertebrata</taxon>
        <taxon>Euteleostomi</taxon>
        <taxon>Mammalia</taxon>
        <taxon>Eutheria</taxon>
        <taxon>Euarchontoglires</taxon>
        <taxon>Glires</taxon>
        <taxon>Rodentia</taxon>
        <taxon>Myomorpha</taxon>
        <taxon>Muroidea</taxon>
        <taxon>Muridae</taxon>
        <taxon>Murinae</taxon>
        <taxon>Mus</taxon>
        <taxon>Mus</taxon>
    </lineage>
</organism>
<keyword id="KW-0165">Cleavage on pair of basic residues</keyword>
<keyword id="KW-0968">Cytoplasmic vesicle</keyword>
<keyword id="KW-1015">Disulfide bond</keyword>
<keyword id="KW-0325">Glycoprotein</keyword>
<keyword id="KW-0378">Hydrolase</keyword>
<keyword id="KW-0645">Protease</keyword>
<keyword id="KW-1185">Reference proteome</keyword>
<keyword id="KW-0964">Secreted</keyword>
<keyword id="KW-0720">Serine protease</keyword>
<keyword id="KW-0732">Signal</keyword>
<keyword id="KW-0865">Zymogen</keyword>
<reference key="1">
    <citation type="journal article" date="1990" name="DNA Cell Biol.">
        <title>cDNA sequence of two distinct pituitary proteins homologous to Kex2 and furin gene products: tissue-specific mRNAs encoding candidates for pro-hormone processing proteinases.</title>
        <authorList>
            <person name="Seidah N.G."/>
            <person name="Gaspar L."/>
            <person name="Mion P."/>
            <person name="Marcinkiewicz M."/>
            <person name="Mbikay M."/>
            <person name="Chretien M."/>
        </authorList>
    </citation>
    <scope>NUCLEOTIDE SEQUENCE [MRNA]</scope>
    <source>
        <tissue>Pituitary</tissue>
    </source>
</reference>
<reference key="2">
    <citation type="journal article" date="1990" name="DNA Cell Biol.">
        <authorList>
            <person name="Seidah N.G."/>
            <person name="Gaspar L."/>
            <person name="Mion P."/>
            <person name="Marcinkiewicz M."/>
            <person name="Mbikay M."/>
            <person name="Chretien M."/>
        </authorList>
    </citation>
    <scope>ERRATUM OF PUBMED:2169760</scope>
</reference>
<reference key="3">
    <citation type="journal article" date="2004" name="Genome Res.">
        <title>The status, quality, and expansion of the NIH full-length cDNA project: the Mammalian Gene Collection (MGC).</title>
        <authorList>
            <consortium name="The MGC Project Team"/>
        </authorList>
    </citation>
    <scope>NUCLEOTIDE SEQUENCE [LARGE SCALE MRNA]</scope>
    <source>
        <strain>C57BL/6J</strain>
        <tissue>Brain</tissue>
    </source>
</reference>
<reference key="4">
    <citation type="journal article" date="2006" name="Mol. Cell. Proteomics">
        <title>Comprehensive identification of phosphorylation sites in postsynaptic density preparations.</title>
        <authorList>
            <person name="Trinidad J.C."/>
            <person name="Specht C.G."/>
            <person name="Thalhammer A."/>
            <person name="Schoepfer R."/>
            <person name="Burlingame A.L."/>
        </authorList>
    </citation>
    <scope>IDENTIFICATION BY MASS SPECTROMETRY [LARGE SCALE ANALYSIS]</scope>
    <source>
        <tissue>Brain</tissue>
    </source>
</reference>
<reference key="5">
    <citation type="journal article" date="2010" name="Cell">
        <title>A tissue-specific atlas of mouse protein phosphorylation and expression.</title>
        <authorList>
            <person name="Huttlin E.L."/>
            <person name="Jedrychowski M.P."/>
            <person name="Elias J.E."/>
            <person name="Goswami T."/>
            <person name="Rad R."/>
            <person name="Beausoleil S.A."/>
            <person name="Villen J."/>
            <person name="Haas W."/>
            <person name="Sowa M.E."/>
            <person name="Gygi S.P."/>
        </authorList>
    </citation>
    <scope>IDENTIFICATION BY MASS SPECTROMETRY [LARGE SCALE ANALYSIS]</scope>
    <source>
        <tissue>Brain</tissue>
    </source>
</reference>
<feature type="signal peptide" evidence="3">
    <location>
        <begin position="1"/>
        <end position="24"/>
    </location>
</feature>
<feature type="propeptide" id="PRO_0000027067" evidence="3">
    <location>
        <begin position="25"/>
        <end position="108"/>
    </location>
</feature>
<feature type="chain" id="PRO_0000027068" description="Neuroendocrine convertase 2">
    <location>
        <begin position="109"/>
        <end position="637"/>
    </location>
</feature>
<feature type="domain" description="Peptidase S8" evidence="5">
    <location>
        <begin position="128"/>
        <end position="452"/>
    </location>
</feature>
<feature type="domain" description="P/Homo B" evidence="4">
    <location>
        <begin position="460"/>
        <end position="596"/>
    </location>
</feature>
<feature type="active site" description="Charge relay system" evidence="5">
    <location>
        <position position="166"/>
    </location>
</feature>
<feature type="active site" description="Charge relay system" evidence="5">
    <location>
        <position position="207"/>
    </location>
</feature>
<feature type="active site" description="Charge relay system" evidence="5">
    <location>
        <position position="383"/>
    </location>
</feature>
<feature type="glycosylation site" description="N-linked (GlcNAc...) asparagine" evidence="3">
    <location>
        <position position="374"/>
    </location>
</feature>
<feature type="glycosylation site" description="N-linked (GlcNAc...) asparagine" evidence="3">
    <location>
        <position position="513"/>
    </location>
</feature>
<feature type="glycosylation site" description="N-linked (GlcNAc...) asparagine" evidence="3">
    <location>
        <position position="523"/>
    </location>
</feature>
<feature type="disulfide bond" evidence="2">
    <location>
        <begin position="224"/>
        <end position="375"/>
    </location>
</feature>
<feature type="disulfide bond" evidence="2">
    <location>
        <begin position="316"/>
        <end position="346"/>
    </location>
</feature>
<feature type="disulfide bond" evidence="2">
    <location>
        <begin position="467"/>
        <end position="493"/>
    </location>
</feature>
<evidence type="ECO:0000250" key="1">
    <source>
        <dbReference type="UniProtKB" id="P16519"/>
    </source>
</evidence>
<evidence type="ECO:0000250" key="2">
    <source>
        <dbReference type="UniProtKB" id="P23188"/>
    </source>
</evidence>
<evidence type="ECO:0000255" key="3"/>
<evidence type="ECO:0000255" key="4">
    <source>
        <dbReference type="PROSITE-ProRule" id="PRU01173"/>
    </source>
</evidence>
<evidence type="ECO:0000255" key="5">
    <source>
        <dbReference type="PROSITE-ProRule" id="PRU01240"/>
    </source>
</evidence>
<evidence type="ECO:0000305" key="6"/>